<name>MQO_HELP2</name>
<proteinExistence type="inferred from homology"/>
<organism>
    <name type="scientific">Helicobacter pylori (strain P12)</name>
    <dbReference type="NCBI Taxonomy" id="570508"/>
    <lineage>
        <taxon>Bacteria</taxon>
        <taxon>Pseudomonadati</taxon>
        <taxon>Campylobacterota</taxon>
        <taxon>Epsilonproteobacteria</taxon>
        <taxon>Campylobacterales</taxon>
        <taxon>Helicobacteraceae</taxon>
        <taxon>Helicobacter</taxon>
    </lineage>
</organism>
<keyword id="KW-0274">FAD</keyword>
<keyword id="KW-0285">Flavoprotein</keyword>
<keyword id="KW-0560">Oxidoreductase</keyword>
<keyword id="KW-0816">Tricarboxylic acid cycle</keyword>
<accession>B6JPI8</accession>
<protein>
    <recommendedName>
        <fullName evidence="1">Probable malate:quinone oxidoreductase</fullName>
        <ecNumber evidence="1">1.1.5.4</ecNumber>
    </recommendedName>
    <alternativeName>
        <fullName evidence="1">MQO</fullName>
    </alternativeName>
    <alternativeName>
        <fullName evidence="1">Malate dehydrogenase [quinone]</fullName>
    </alternativeName>
</protein>
<gene>
    <name evidence="1" type="primary">mqo</name>
    <name type="ordered locus">HPP12_0089</name>
</gene>
<feature type="chain" id="PRO_1000099873" description="Probable malate:quinone oxidoreductase">
    <location>
        <begin position="1"/>
        <end position="450"/>
    </location>
</feature>
<comment type="catalytic activity">
    <reaction evidence="1">
        <text>(S)-malate + a quinone = a quinol + oxaloacetate</text>
        <dbReference type="Rhea" id="RHEA:46012"/>
        <dbReference type="ChEBI" id="CHEBI:15589"/>
        <dbReference type="ChEBI" id="CHEBI:16452"/>
        <dbReference type="ChEBI" id="CHEBI:24646"/>
        <dbReference type="ChEBI" id="CHEBI:132124"/>
        <dbReference type="EC" id="1.1.5.4"/>
    </reaction>
</comment>
<comment type="cofactor">
    <cofactor evidence="1">
        <name>FAD</name>
        <dbReference type="ChEBI" id="CHEBI:57692"/>
    </cofactor>
</comment>
<comment type="pathway">
    <text evidence="1">Carbohydrate metabolism; tricarboxylic acid cycle; oxaloacetate from (S)-malate (quinone route): step 1/1.</text>
</comment>
<comment type="similarity">
    <text evidence="1">Belongs to the MQO family.</text>
</comment>
<evidence type="ECO:0000255" key="1">
    <source>
        <dbReference type="HAMAP-Rule" id="MF_00212"/>
    </source>
</evidence>
<reference key="1">
    <citation type="submission" date="2008-10" db="EMBL/GenBank/DDBJ databases">
        <title>The complete genome sequence of Helicobacter pylori strain P12.</title>
        <authorList>
            <person name="Fischer W."/>
            <person name="Windhager L."/>
            <person name="Karnholz A."/>
            <person name="Zeiller M."/>
            <person name="Zimmer R."/>
            <person name="Haas R."/>
        </authorList>
    </citation>
    <scope>NUCLEOTIDE SEQUENCE [LARGE SCALE GENOMIC DNA]</scope>
    <source>
        <strain>P12</strain>
    </source>
</reference>
<dbReference type="EC" id="1.1.5.4" evidence="1"/>
<dbReference type="EMBL" id="CP001217">
    <property type="protein sequence ID" value="ACJ07249.1"/>
    <property type="molecule type" value="Genomic_DNA"/>
</dbReference>
<dbReference type="SMR" id="B6JPI8"/>
<dbReference type="KEGG" id="hpp:HPP12_0089"/>
<dbReference type="HOGENOM" id="CLU_613842_0_0_7"/>
<dbReference type="UniPathway" id="UPA00223">
    <property type="reaction ID" value="UER01008"/>
</dbReference>
<dbReference type="Proteomes" id="UP000008198">
    <property type="component" value="Chromosome"/>
</dbReference>
<dbReference type="GO" id="GO:0005737">
    <property type="term" value="C:cytoplasm"/>
    <property type="evidence" value="ECO:0007669"/>
    <property type="project" value="TreeGrafter"/>
</dbReference>
<dbReference type="GO" id="GO:0047545">
    <property type="term" value="F:2-hydroxyglutarate dehydrogenase activity"/>
    <property type="evidence" value="ECO:0007669"/>
    <property type="project" value="TreeGrafter"/>
</dbReference>
<dbReference type="GO" id="GO:0008924">
    <property type="term" value="F:L-malate dehydrogenase (quinone) activity"/>
    <property type="evidence" value="ECO:0007669"/>
    <property type="project" value="UniProtKB-UniRule"/>
</dbReference>
<dbReference type="GO" id="GO:0006099">
    <property type="term" value="P:tricarboxylic acid cycle"/>
    <property type="evidence" value="ECO:0007669"/>
    <property type="project" value="UniProtKB-UniRule"/>
</dbReference>
<dbReference type="FunFam" id="3.50.50.60:FF:000332">
    <property type="entry name" value="Probable malate:quinone oxidoreductase"/>
    <property type="match status" value="1"/>
</dbReference>
<dbReference type="Gene3D" id="3.30.9.10">
    <property type="entry name" value="D-Amino Acid Oxidase, subunit A, domain 2"/>
    <property type="match status" value="1"/>
</dbReference>
<dbReference type="Gene3D" id="3.50.50.60">
    <property type="entry name" value="FAD/NAD(P)-binding domain"/>
    <property type="match status" value="1"/>
</dbReference>
<dbReference type="HAMAP" id="MF_00212">
    <property type="entry name" value="MQO"/>
    <property type="match status" value="1"/>
</dbReference>
<dbReference type="InterPro" id="IPR036188">
    <property type="entry name" value="FAD/NAD-bd_sf"/>
</dbReference>
<dbReference type="InterPro" id="IPR006231">
    <property type="entry name" value="MQO"/>
</dbReference>
<dbReference type="PANTHER" id="PTHR43104">
    <property type="entry name" value="L-2-HYDROXYGLUTARATE DEHYDROGENASE, MITOCHONDRIAL"/>
    <property type="match status" value="1"/>
</dbReference>
<dbReference type="PANTHER" id="PTHR43104:SF2">
    <property type="entry name" value="L-2-HYDROXYGLUTARATE DEHYDROGENASE, MITOCHONDRIAL"/>
    <property type="match status" value="1"/>
</dbReference>
<dbReference type="Pfam" id="PF06039">
    <property type="entry name" value="Mqo"/>
    <property type="match status" value="1"/>
</dbReference>
<dbReference type="SUPFAM" id="SSF51905">
    <property type="entry name" value="FAD/NAD(P)-binding domain"/>
    <property type="match status" value="1"/>
</dbReference>
<sequence length="450" mass="50670">MSMEFDAVIIGGGVSGCATFYTLSEYSSLKRVAIVEKCSKLAQISSSAKANSQTIHDGSIETNYTPEKAKKVRLSAYKTRQYALNKGLQNEVIFETQKMAIGVGDEECEFMKKRYESFKEIFVGLEEFDKQKIKELEPNVILGANGIDRHENIVGHGYQKDWSTMNFAKLSENFVEEALKLRPNNQVFLNFKVKKIEKRNDTYAVISEDAEEVYAKFVLVNAGSYALPLAQSMGYGLDLGCLPVAGSFYFVPDLLKGKVYTVQNPKLPFAAVHGDPDAVIKGKTRIGPTALTMPKLERNKCWLKGISLELLKMDLNKDVFKIAFDLMSDKEIRNYVFKNMVFELPIIGKRKFLKDAQKIIPSLSLEDLEYAHGFGEVRPQVLDRTKRKLELGEKKICTHKGITFNMTPSPGATSCLQNALVDSQEIAAYLGESFELERFYKDLSPEELEN</sequence>